<proteinExistence type="inferred from homology"/>
<accession>B2SJL4</accession>
<reference key="1">
    <citation type="journal article" date="2008" name="BMC Genomics">
        <title>Genome sequence and rapid evolution of the rice pathogen Xanthomonas oryzae pv. oryzae PXO99A.</title>
        <authorList>
            <person name="Salzberg S.L."/>
            <person name="Sommer D.D."/>
            <person name="Schatz M.C."/>
            <person name="Phillippy A.M."/>
            <person name="Rabinowicz P.D."/>
            <person name="Tsuge S."/>
            <person name="Furutani A."/>
            <person name="Ochiai H."/>
            <person name="Delcher A.L."/>
            <person name="Kelley D."/>
            <person name="Madupu R."/>
            <person name="Puiu D."/>
            <person name="Radune D."/>
            <person name="Shumway M."/>
            <person name="Trapnell C."/>
            <person name="Aparna G."/>
            <person name="Jha G."/>
            <person name="Pandey A."/>
            <person name="Patil P.B."/>
            <person name="Ishihara H."/>
            <person name="Meyer D.F."/>
            <person name="Szurek B."/>
            <person name="Verdier V."/>
            <person name="Koebnik R."/>
            <person name="Dow J.M."/>
            <person name="Ryan R.P."/>
            <person name="Hirata H."/>
            <person name="Tsuyumu S."/>
            <person name="Won Lee S."/>
            <person name="Seo Y.-S."/>
            <person name="Sriariyanum M."/>
            <person name="Ronald P.C."/>
            <person name="Sonti R.V."/>
            <person name="Van Sluys M.-A."/>
            <person name="Leach J.E."/>
            <person name="White F.F."/>
            <person name="Bogdanove A.J."/>
        </authorList>
    </citation>
    <scope>NUCLEOTIDE SEQUENCE [LARGE SCALE GENOMIC DNA]</scope>
    <source>
        <strain>PXO99A</strain>
    </source>
</reference>
<keyword id="KW-0378">Hydrolase</keyword>
<gene>
    <name evidence="1" type="primary">folE2</name>
    <name type="ordered locus">PXO_00695</name>
</gene>
<comment type="function">
    <text evidence="1">Converts GTP to 7,8-dihydroneopterin triphosphate.</text>
</comment>
<comment type="catalytic activity">
    <reaction evidence="1">
        <text>GTP + H2O = 7,8-dihydroneopterin 3'-triphosphate + formate + H(+)</text>
        <dbReference type="Rhea" id="RHEA:17473"/>
        <dbReference type="ChEBI" id="CHEBI:15377"/>
        <dbReference type="ChEBI" id="CHEBI:15378"/>
        <dbReference type="ChEBI" id="CHEBI:15740"/>
        <dbReference type="ChEBI" id="CHEBI:37565"/>
        <dbReference type="ChEBI" id="CHEBI:58462"/>
        <dbReference type="EC" id="3.5.4.16"/>
    </reaction>
</comment>
<comment type="pathway">
    <text evidence="1">Cofactor biosynthesis; 7,8-dihydroneopterin triphosphate biosynthesis; 7,8-dihydroneopterin triphosphate from GTP: step 1/1.</text>
</comment>
<comment type="similarity">
    <text evidence="1">Belongs to the GTP cyclohydrolase IV family.</text>
</comment>
<comment type="sequence caution" evidence="2">
    <conflict type="erroneous initiation">
        <sequence resource="EMBL-CDS" id="ACD58798"/>
    </conflict>
</comment>
<evidence type="ECO:0000255" key="1">
    <source>
        <dbReference type="HAMAP-Rule" id="MF_01527"/>
    </source>
</evidence>
<evidence type="ECO:0000305" key="2"/>
<name>GCH4_XANOP</name>
<organism>
    <name type="scientific">Xanthomonas oryzae pv. oryzae (strain PXO99A)</name>
    <dbReference type="NCBI Taxonomy" id="360094"/>
    <lineage>
        <taxon>Bacteria</taxon>
        <taxon>Pseudomonadati</taxon>
        <taxon>Pseudomonadota</taxon>
        <taxon>Gammaproteobacteria</taxon>
        <taxon>Lysobacterales</taxon>
        <taxon>Lysobacteraceae</taxon>
        <taxon>Xanthomonas</taxon>
    </lineage>
</organism>
<protein>
    <recommendedName>
        <fullName evidence="1">GTP cyclohydrolase FolE2</fullName>
        <ecNumber evidence="1">3.5.4.16</ecNumber>
    </recommendedName>
</protein>
<sequence length="306" mass="33383">MSATLPDVAVTEAFTLSAPLRWVGMQDIAIPVHLDAASGSGLAARASVQVDLPRAELKGIHMSRLYRLLDLHLQRPLSPAMLPQLLQALIESHADCASRAARLTLSFALMLRMPALRSEGLSGWRAYPVRIAAQCRAGRTTIQLQVEVLYASTCPCSAALSRQLLSDAFVQQHAWCDALPLQDVAQWLQDHGSYATPHSQRSVAQVCVDLPADTQGFAIQELIGLCEQALATPVQAAVRRPDEQAFARLNGANLMYVEDAARRLRKQLAEHYATFHVAVRHLESLHAHDAVAETGSDDETFFPAAL</sequence>
<dbReference type="EC" id="3.5.4.16" evidence="1"/>
<dbReference type="EMBL" id="CP000967">
    <property type="protein sequence ID" value="ACD58798.1"/>
    <property type="status" value="ALT_INIT"/>
    <property type="molecule type" value="Genomic_DNA"/>
</dbReference>
<dbReference type="RefSeq" id="WP_011408568.1">
    <property type="nucleotide sequence ID" value="NC_010717.2"/>
</dbReference>
<dbReference type="SMR" id="B2SJL4"/>
<dbReference type="KEGG" id="xop:PXO_00695"/>
<dbReference type="eggNOG" id="COG1469">
    <property type="taxonomic scope" value="Bacteria"/>
</dbReference>
<dbReference type="HOGENOM" id="CLU_062816_0_0_6"/>
<dbReference type="UniPathway" id="UPA00848">
    <property type="reaction ID" value="UER00151"/>
</dbReference>
<dbReference type="Proteomes" id="UP000001740">
    <property type="component" value="Chromosome"/>
</dbReference>
<dbReference type="GO" id="GO:0003934">
    <property type="term" value="F:GTP cyclohydrolase I activity"/>
    <property type="evidence" value="ECO:0007669"/>
    <property type="project" value="UniProtKB-UniRule"/>
</dbReference>
<dbReference type="GO" id="GO:0046654">
    <property type="term" value="P:tetrahydrofolate biosynthetic process"/>
    <property type="evidence" value="ECO:0007669"/>
    <property type="project" value="UniProtKB-UniRule"/>
</dbReference>
<dbReference type="Gene3D" id="3.10.270.10">
    <property type="entry name" value="Urate Oxidase"/>
    <property type="match status" value="1"/>
</dbReference>
<dbReference type="HAMAP" id="MF_01527_B">
    <property type="entry name" value="GTP_cyclohydrol_B"/>
    <property type="match status" value="1"/>
</dbReference>
<dbReference type="InterPro" id="IPR022838">
    <property type="entry name" value="GTP_cyclohydrolase_FolE2"/>
</dbReference>
<dbReference type="InterPro" id="IPR003801">
    <property type="entry name" value="GTP_cyclohydrolase_FolE2/MptA"/>
</dbReference>
<dbReference type="NCBIfam" id="NF010200">
    <property type="entry name" value="PRK13674.1-1"/>
    <property type="match status" value="1"/>
</dbReference>
<dbReference type="PANTHER" id="PTHR36445">
    <property type="entry name" value="GTP CYCLOHYDROLASE MPTA"/>
    <property type="match status" value="1"/>
</dbReference>
<dbReference type="PANTHER" id="PTHR36445:SF1">
    <property type="entry name" value="GTP CYCLOHYDROLASE MPTA"/>
    <property type="match status" value="1"/>
</dbReference>
<dbReference type="Pfam" id="PF02649">
    <property type="entry name" value="GCHY-1"/>
    <property type="match status" value="1"/>
</dbReference>
<feature type="chain" id="PRO_0000372037" description="GTP cyclohydrolase FolE2">
    <location>
        <begin position="1"/>
        <end position="306"/>
    </location>
</feature>
<feature type="site" description="May be catalytically important" evidence="1">
    <location>
        <position position="154"/>
    </location>
</feature>